<sequence length="325" mass="36099">MAVSDRKLQLLDFEKPLAELEDRIEQIRSLSEQNGVDVTDQIAQLEGRAEQLRQEIFSSLTPMQELQLARHPRRPSTLDYIHAISDEWMELHGDRRGYDDPAIVGGVGRIGGQPVLMLGHQKGRDTKDNVARNFGMPFPSGYRKAMRLMDHADRFGLPIISFIDTPAAWAGLEAEQFGQGEAIALNLREMFRLDVPIICTVIGEGGSGGALGIGVGDRLLMFEHSIYSVAPPEACAAILWRDAQEGPQAAEALKITATDLQELGIIDQILPEPPGGAHVNPIKAANIIKTAILSNLEELWRLSPQERRQQRYHKFRNMGIFSQLP</sequence>
<dbReference type="EC" id="2.1.3.15" evidence="1"/>
<dbReference type="EMBL" id="CP000828">
    <property type="protein sequence ID" value="ABW30583.1"/>
    <property type="molecule type" value="Genomic_DNA"/>
</dbReference>
<dbReference type="RefSeq" id="WP_012165803.1">
    <property type="nucleotide sequence ID" value="NC_009925.1"/>
</dbReference>
<dbReference type="SMR" id="B0CF67"/>
<dbReference type="STRING" id="329726.AM1_5633"/>
<dbReference type="KEGG" id="amr:AM1_5633"/>
<dbReference type="eggNOG" id="COG0825">
    <property type="taxonomic scope" value="Bacteria"/>
</dbReference>
<dbReference type="HOGENOM" id="CLU_015486_0_2_3"/>
<dbReference type="OrthoDB" id="9808023at2"/>
<dbReference type="UniPathway" id="UPA00655">
    <property type="reaction ID" value="UER00711"/>
</dbReference>
<dbReference type="Proteomes" id="UP000000268">
    <property type="component" value="Chromosome"/>
</dbReference>
<dbReference type="GO" id="GO:0009317">
    <property type="term" value="C:acetyl-CoA carboxylase complex"/>
    <property type="evidence" value="ECO:0007669"/>
    <property type="project" value="InterPro"/>
</dbReference>
<dbReference type="GO" id="GO:0003989">
    <property type="term" value="F:acetyl-CoA carboxylase activity"/>
    <property type="evidence" value="ECO:0007669"/>
    <property type="project" value="InterPro"/>
</dbReference>
<dbReference type="GO" id="GO:0005524">
    <property type="term" value="F:ATP binding"/>
    <property type="evidence" value="ECO:0007669"/>
    <property type="project" value="UniProtKB-KW"/>
</dbReference>
<dbReference type="GO" id="GO:0016743">
    <property type="term" value="F:carboxyl- or carbamoyltransferase activity"/>
    <property type="evidence" value="ECO:0007669"/>
    <property type="project" value="UniProtKB-UniRule"/>
</dbReference>
<dbReference type="GO" id="GO:0006633">
    <property type="term" value="P:fatty acid biosynthetic process"/>
    <property type="evidence" value="ECO:0007669"/>
    <property type="project" value="UniProtKB-KW"/>
</dbReference>
<dbReference type="GO" id="GO:2001295">
    <property type="term" value="P:malonyl-CoA biosynthetic process"/>
    <property type="evidence" value="ECO:0007669"/>
    <property type="project" value="UniProtKB-UniRule"/>
</dbReference>
<dbReference type="Gene3D" id="3.90.226.10">
    <property type="entry name" value="2-enoyl-CoA Hydratase, Chain A, domain 1"/>
    <property type="match status" value="1"/>
</dbReference>
<dbReference type="HAMAP" id="MF_00823">
    <property type="entry name" value="AcetylCoA_CT_alpha"/>
    <property type="match status" value="1"/>
</dbReference>
<dbReference type="InterPro" id="IPR001095">
    <property type="entry name" value="Acetyl_CoA_COase_a_su"/>
</dbReference>
<dbReference type="InterPro" id="IPR029045">
    <property type="entry name" value="ClpP/crotonase-like_dom_sf"/>
</dbReference>
<dbReference type="InterPro" id="IPR011763">
    <property type="entry name" value="COA_CT_C"/>
</dbReference>
<dbReference type="NCBIfam" id="TIGR00513">
    <property type="entry name" value="accA"/>
    <property type="match status" value="1"/>
</dbReference>
<dbReference type="NCBIfam" id="NF041504">
    <property type="entry name" value="AccA_sub"/>
    <property type="match status" value="1"/>
</dbReference>
<dbReference type="NCBIfam" id="NF004344">
    <property type="entry name" value="PRK05724.1"/>
    <property type="match status" value="1"/>
</dbReference>
<dbReference type="PANTHER" id="PTHR42853">
    <property type="entry name" value="ACETYL-COENZYME A CARBOXYLASE CARBOXYL TRANSFERASE SUBUNIT ALPHA"/>
    <property type="match status" value="1"/>
</dbReference>
<dbReference type="PANTHER" id="PTHR42853:SF3">
    <property type="entry name" value="ACETYL-COENZYME A CARBOXYLASE CARBOXYL TRANSFERASE SUBUNIT ALPHA, CHLOROPLASTIC"/>
    <property type="match status" value="1"/>
</dbReference>
<dbReference type="Pfam" id="PF03255">
    <property type="entry name" value="ACCA"/>
    <property type="match status" value="1"/>
</dbReference>
<dbReference type="PRINTS" id="PR01069">
    <property type="entry name" value="ACCCTRFRASEA"/>
</dbReference>
<dbReference type="SUPFAM" id="SSF52096">
    <property type="entry name" value="ClpP/crotonase"/>
    <property type="match status" value="1"/>
</dbReference>
<dbReference type="PROSITE" id="PS50989">
    <property type="entry name" value="COA_CT_CTER"/>
    <property type="match status" value="1"/>
</dbReference>
<comment type="function">
    <text evidence="1">Component of the acetyl coenzyme A carboxylase (ACC) complex. First, biotin carboxylase catalyzes the carboxylation of biotin on its carrier protein (BCCP) and then the CO(2) group is transferred by the carboxyltransferase to acetyl-CoA to form malonyl-CoA.</text>
</comment>
<comment type="catalytic activity">
    <reaction evidence="1">
        <text>N(6)-carboxybiotinyl-L-lysyl-[protein] + acetyl-CoA = N(6)-biotinyl-L-lysyl-[protein] + malonyl-CoA</text>
        <dbReference type="Rhea" id="RHEA:54728"/>
        <dbReference type="Rhea" id="RHEA-COMP:10505"/>
        <dbReference type="Rhea" id="RHEA-COMP:10506"/>
        <dbReference type="ChEBI" id="CHEBI:57288"/>
        <dbReference type="ChEBI" id="CHEBI:57384"/>
        <dbReference type="ChEBI" id="CHEBI:83144"/>
        <dbReference type="ChEBI" id="CHEBI:83145"/>
        <dbReference type="EC" id="2.1.3.15"/>
    </reaction>
</comment>
<comment type="pathway">
    <text evidence="1">Lipid metabolism; malonyl-CoA biosynthesis; malonyl-CoA from acetyl-CoA: step 1/1.</text>
</comment>
<comment type="subunit">
    <text evidence="1">Acetyl-CoA carboxylase is a heterohexamer composed of biotin carboxyl carrier protein (AccB), biotin carboxylase (AccC) and two subunits each of ACCase subunit alpha (AccA) and ACCase subunit beta (AccD).</text>
</comment>
<comment type="subcellular location">
    <subcellularLocation>
        <location evidence="1">Cytoplasm</location>
    </subcellularLocation>
</comment>
<comment type="similarity">
    <text evidence="1">Belongs to the AccA family.</text>
</comment>
<reference key="1">
    <citation type="journal article" date="2008" name="Proc. Natl. Acad. Sci. U.S.A.">
        <title>Niche adaptation and genome expansion in the chlorophyll d-producing cyanobacterium Acaryochloris marina.</title>
        <authorList>
            <person name="Swingley W.D."/>
            <person name="Chen M."/>
            <person name="Cheung P.C."/>
            <person name="Conrad A.L."/>
            <person name="Dejesa L.C."/>
            <person name="Hao J."/>
            <person name="Honchak B.M."/>
            <person name="Karbach L.E."/>
            <person name="Kurdoglu A."/>
            <person name="Lahiri S."/>
            <person name="Mastrian S.D."/>
            <person name="Miyashita H."/>
            <person name="Page L."/>
            <person name="Ramakrishna P."/>
            <person name="Satoh S."/>
            <person name="Sattley W.M."/>
            <person name="Shimada Y."/>
            <person name="Taylor H.L."/>
            <person name="Tomo T."/>
            <person name="Tsuchiya T."/>
            <person name="Wang Z.T."/>
            <person name="Raymond J."/>
            <person name="Mimuro M."/>
            <person name="Blankenship R.E."/>
            <person name="Touchman J.W."/>
        </authorList>
    </citation>
    <scope>NUCLEOTIDE SEQUENCE [LARGE SCALE GENOMIC DNA]</scope>
    <source>
        <strain>MBIC 11017</strain>
    </source>
</reference>
<keyword id="KW-0067">ATP-binding</keyword>
<keyword id="KW-0963">Cytoplasm</keyword>
<keyword id="KW-0275">Fatty acid biosynthesis</keyword>
<keyword id="KW-0276">Fatty acid metabolism</keyword>
<keyword id="KW-0444">Lipid biosynthesis</keyword>
<keyword id="KW-0443">Lipid metabolism</keyword>
<keyword id="KW-0547">Nucleotide-binding</keyword>
<keyword id="KW-1185">Reference proteome</keyword>
<keyword id="KW-0808">Transferase</keyword>
<accession>B0CF67</accession>
<organism>
    <name type="scientific">Acaryochloris marina (strain MBIC 11017)</name>
    <dbReference type="NCBI Taxonomy" id="329726"/>
    <lineage>
        <taxon>Bacteria</taxon>
        <taxon>Bacillati</taxon>
        <taxon>Cyanobacteriota</taxon>
        <taxon>Cyanophyceae</taxon>
        <taxon>Acaryochloridales</taxon>
        <taxon>Acaryochloridaceae</taxon>
        <taxon>Acaryochloris</taxon>
    </lineage>
</organism>
<proteinExistence type="inferred from homology"/>
<name>ACCA_ACAM1</name>
<evidence type="ECO:0000255" key="1">
    <source>
        <dbReference type="HAMAP-Rule" id="MF_00823"/>
    </source>
</evidence>
<evidence type="ECO:0000255" key="2">
    <source>
        <dbReference type="PROSITE-ProRule" id="PRU01137"/>
    </source>
</evidence>
<protein>
    <recommendedName>
        <fullName evidence="1">Acetyl-coenzyme A carboxylase carboxyl transferase subunit alpha</fullName>
        <shortName evidence="1">ACCase subunit alpha</shortName>
        <shortName evidence="1">Acetyl-CoA carboxylase carboxyltransferase subunit alpha</shortName>
        <ecNumber evidence="1">2.1.3.15</ecNumber>
    </recommendedName>
</protein>
<gene>
    <name evidence="1" type="primary">accA</name>
    <name type="ordered locus">AM1_5633</name>
</gene>
<feature type="chain" id="PRO_1000083917" description="Acetyl-coenzyme A carboxylase carboxyl transferase subunit alpha">
    <location>
        <begin position="1"/>
        <end position="325"/>
    </location>
</feature>
<feature type="domain" description="CoA carboxyltransferase C-terminal" evidence="2">
    <location>
        <begin position="44"/>
        <end position="298"/>
    </location>
</feature>